<feature type="chain" id="PRO_5003917645" description="Maestro heat-like repeat-containing protein family member 1 homolog">
    <location>
        <begin position="1"/>
        <end position="1768"/>
    </location>
</feature>
<feature type="repeat" description="HEAT 1" evidence="1">
    <location>
        <begin position="4"/>
        <end position="47"/>
    </location>
</feature>
<feature type="repeat" description="HEAT 2" evidence="1">
    <location>
        <begin position="164"/>
        <end position="203"/>
    </location>
</feature>
<feature type="repeat" description="HEAT 3" evidence="1">
    <location>
        <begin position="816"/>
        <end position="856"/>
    </location>
</feature>
<feature type="repeat" description="HEAT 4" evidence="1">
    <location>
        <begin position="1166"/>
        <end position="1204"/>
    </location>
</feature>
<feature type="repeat" description="HEAT 5" evidence="1">
    <location>
        <begin position="1483"/>
        <end position="1521"/>
    </location>
</feature>
<feature type="repeat" description="HEAT 6" evidence="1">
    <location>
        <begin position="1731"/>
        <end position="1768"/>
    </location>
</feature>
<protein>
    <recommendedName>
        <fullName evidence="4">Maestro heat-like repeat-containing protein family member 1 homolog</fullName>
    </recommendedName>
    <alternativeName>
        <fullName evidence="4">HEAT repeat protein 27</fullName>
    </alternativeName>
</protein>
<gene>
    <name evidence="3 5" type="primary">hpo-27</name>
    <name evidence="5" type="ORF">C34G6.1</name>
</gene>
<organism>
    <name type="scientific">Caenorhabditis elegans</name>
    <dbReference type="NCBI Taxonomy" id="6239"/>
    <lineage>
        <taxon>Eukaryota</taxon>
        <taxon>Metazoa</taxon>
        <taxon>Ecdysozoa</taxon>
        <taxon>Nematoda</taxon>
        <taxon>Chromadorea</taxon>
        <taxon>Rhabditida</taxon>
        <taxon>Rhabditina</taxon>
        <taxon>Rhabditomorpha</taxon>
        <taxon>Rhabditoidea</taxon>
        <taxon>Rhabditidae</taxon>
        <taxon>Peloderinae</taxon>
        <taxon>Caenorhabditis</taxon>
    </lineage>
</organism>
<keyword id="KW-0458">Lysosome</keyword>
<keyword id="KW-0472">Membrane</keyword>
<keyword id="KW-1185">Reference proteome</keyword>
<keyword id="KW-0677">Repeat</keyword>
<name>HPO27_CAEEL</name>
<evidence type="ECO:0000255" key="1"/>
<evidence type="ECO:0000269" key="2">
    <source>
    </source>
</evidence>
<evidence type="ECO:0000303" key="3">
    <source>
    </source>
</evidence>
<evidence type="ECO:0000305" key="4"/>
<evidence type="ECO:0000312" key="5">
    <source>
        <dbReference type="WormBase" id="C34G6.1"/>
    </source>
</evidence>
<dbReference type="EMBL" id="BX284601">
    <property type="protein sequence ID" value="CCO25633.1"/>
    <property type="molecule type" value="Genomic_DNA"/>
</dbReference>
<dbReference type="RefSeq" id="NP_001263449.1">
    <property type="nucleotide sequence ID" value="NM_001276520.4"/>
</dbReference>
<dbReference type="FunCoup" id="K8ERU3">
    <property type="interactions" value="1908"/>
</dbReference>
<dbReference type="STRING" id="6239.C34G6.1.1"/>
<dbReference type="PaxDb" id="6239-C34G6.1"/>
<dbReference type="PeptideAtlas" id="K8ERU3"/>
<dbReference type="EnsemblMetazoa" id="C34G6.1.1">
    <property type="protein sequence ID" value="C34G6.1.1"/>
    <property type="gene ID" value="WBGene00016418"/>
</dbReference>
<dbReference type="GeneID" id="24104280"/>
<dbReference type="KEGG" id="cel:CELE_C34G6.1"/>
<dbReference type="AGR" id="WB:WBGene00016418"/>
<dbReference type="CTD" id="24104280"/>
<dbReference type="WormBase" id="C34G6.1">
    <property type="protein sequence ID" value="CE30431"/>
    <property type="gene ID" value="WBGene00016418"/>
    <property type="gene designation" value="hpo-27"/>
</dbReference>
<dbReference type="eggNOG" id="KOG2032">
    <property type="taxonomic scope" value="Eukaryota"/>
</dbReference>
<dbReference type="GeneTree" id="ENSGT00940000166577"/>
<dbReference type="HOGENOM" id="CLU_003168_0_1_1"/>
<dbReference type="InParanoid" id="K8ERU3"/>
<dbReference type="OMA" id="EVYIKAM"/>
<dbReference type="OrthoDB" id="1884734at2759"/>
<dbReference type="PhylomeDB" id="K8ERU3"/>
<dbReference type="PRO" id="PR:K8ERU3"/>
<dbReference type="Proteomes" id="UP000001940">
    <property type="component" value="Chromosome I"/>
</dbReference>
<dbReference type="Bgee" id="WBGene00016418">
    <property type="expression patterns" value="Expressed in adult organism and 4 other cell types or tissues"/>
</dbReference>
<dbReference type="GO" id="GO:0005737">
    <property type="term" value="C:cytoplasm"/>
    <property type="evidence" value="ECO:0000318"/>
    <property type="project" value="GO_Central"/>
</dbReference>
<dbReference type="GO" id="GO:0005765">
    <property type="term" value="C:lysosomal membrane"/>
    <property type="evidence" value="ECO:0000314"/>
    <property type="project" value="UniProtKB"/>
</dbReference>
<dbReference type="GO" id="GO:0140912">
    <property type="term" value="F:membrane destabilizing activity"/>
    <property type="evidence" value="ECO:0000314"/>
    <property type="project" value="UniProtKB"/>
</dbReference>
<dbReference type="GO" id="GO:0170064">
    <property type="term" value="P:lysosome fission"/>
    <property type="evidence" value="ECO:0000314"/>
    <property type="project" value="UniProtKB"/>
</dbReference>
<dbReference type="Gene3D" id="1.25.10.10">
    <property type="entry name" value="Leucine-rich Repeat Variant"/>
    <property type="match status" value="3"/>
</dbReference>
<dbReference type="InterPro" id="IPR011989">
    <property type="entry name" value="ARM-like"/>
</dbReference>
<dbReference type="InterPro" id="IPR016024">
    <property type="entry name" value="ARM-type_fold"/>
</dbReference>
<dbReference type="InterPro" id="IPR055406">
    <property type="entry name" value="HEAT_Maestro"/>
</dbReference>
<dbReference type="InterPro" id="IPR055408">
    <property type="entry name" value="HEAT_MROH2B-like"/>
</dbReference>
<dbReference type="InterPro" id="IPR048465">
    <property type="entry name" value="Maestro-like_HEAT"/>
</dbReference>
<dbReference type="InterPro" id="IPR045206">
    <property type="entry name" value="Maestro_heat-like_prot"/>
</dbReference>
<dbReference type="PANTHER" id="PTHR23120:SF0">
    <property type="entry name" value="MAESTRO HEAT-LIKE REPEAT FAMILY MEMBER 1"/>
    <property type="match status" value="1"/>
</dbReference>
<dbReference type="PANTHER" id="PTHR23120">
    <property type="entry name" value="MAESTRO-RELATED HEAT DOMAIN-CONTAINING"/>
    <property type="match status" value="1"/>
</dbReference>
<dbReference type="Pfam" id="PF21047">
    <property type="entry name" value="HEAT_Maestro"/>
    <property type="match status" value="1"/>
</dbReference>
<dbReference type="Pfam" id="PF23210">
    <property type="entry name" value="HEAT_Maestro_2"/>
    <property type="match status" value="1"/>
</dbReference>
<dbReference type="Pfam" id="PF23227">
    <property type="entry name" value="HEAT_MROH2B_C"/>
    <property type="match status" value="1"/>
</dbReference>
<dbReference type="SUPFAM" id="SSF48371">
    <property type="entry name" value="ARM repeat"/>
    <property type="match status" value="2"/>
</dbReference>
<accession>K8ERU3</accession>
<proteinExistence type="evidence at protein level"/>
<comment type="function">
    <text evidence="2">Lysosome fission factor (PubMed:38538795). Recruited to lysosomes by rab-7 at scission sites and homooligomerizes to mediate the constriction and scission of lysosomal tubules (PubMed:38538795). May sever membranes by inserting amphipathic helices into one bilayer leaflet (PubMed:38538795). Lysosome fission is required to maintain their steady-state number, shape, size, composition and function, and to accomplish regeneration (PubMed:38538795).</text>
</comment>
<comment type="subunit">
    <text evidence="2">Homooligomer; homooligomerizes at lysosome scission sites.</text>
</comment>
<comment type="subcellular location">
    <subcellularLocation>
        <location evidence="2">Lysosome membrane</location>
    </subcellularLocation>
    <text evidence="2">Recruited to the lysosome membrane by rab-7.</text>
</comment>
<comment type="similarity">
    <text evidence="4">Belongs to the MROH1 family.</text>
</comment>
<sequence>MAATSQVSSLLDLIMSLLDTATTYQHQESVKNEVAESLKTIGSHQPNVLLTACHQYLLQNPKLGAFKRAFVLQTISICVDNCEVVSKLDEQIIMLIINLATQEMNMTKDTDVEWAESSMEVLVTLAKNTRFVSHVIDAILQKFPPGQTTSPHRYIVLTMATIAVHNPFGLVPFLTDILSRTVPLLQHVKTDPLRCAWARAICSFCEAVRECETERPKEASEEYIGDHSRPNSASGHCQEVSNRATYSDQTEAVYDVIFSWIYSKDPKTRGEAAECVGELCLMIKQTRLVEDVKKIVTNMIPLYRKSYNESHMITQGICRFLEAACVDETCPLEPYLEDILNALFPNACLDPDDTTVTLSTQAIKNHSEAFRCFDVAATRFADRIVYYLLHKMQNVADSQKLGAINVLRHLLNATGQHMEDKRSLLTMGLKKLLAAENTTSIRVKRAIVQLCVALADHSYVDAEGGDYVIAFLVRNLVGPTEQESAAKKVEVDVAGLNQLRTQCAQALYTIANTCVCATKLLWPYLLEFICCERYTPVVGDLCKCLRTLVSREVEAGRKMDYVTGFDNPKVAGRHAVFARLFTSFCNAPLNGLLTRRAREAGGLIQAVAPWFHPSMEGPAARWSEKLEPLLDELSTTVSSGDSAPAELRGRKIARWHEACLDWLSACVAVVPEGDWRQDLAAAMGKQLDMYKELSDEKSFLLRCLGVTLARITAKQFVIDHMMLMFKSASHSVLTERQGCARGVGSIATSHMDLILIELENVSKWEHARKSSGIFGFIKDTMPIRQYPDIEMIHLRATLMLCYGHVVMACSLDTITQRLQNTIIVFLRNYFANSKQETVVREAMLETMRLIATAVHPSRIGGEWKFEARNELLAYAKDYLNGETPEWLTSSLRLLACKTTAALVQLEPPLSPADIEDIGTVLTRQILPMQREKSGLKTLAFDIFDYASSSVFSTFSGSSSSHTNIYMTPPLTANSVAEGPNGTPIHQRHRGIGGKMEDDESATIMDATMHQYGLALEQIVRMAPTTQTIMILLKILLPYYGKQADHERIRAVDMTVLVLRVYYECAEDISLGHASDFEPLSSLLGRLAPRLIDLLAHVRLQALSAIHWTLRLAYMHKGHGRDADQSLFSYSGFVEKYLTSGDVKLEGQKEKLAIEAIAQIIEYRLPQSQMQIYLSAIFEMLTDRQSHVSSAAAQLLTYAVMARGATLNAEAEILVTKMVEKLADIHHCVQTNTDVLAALVAFAVHQQQAVCDVLFKQPLPYSINITDAWECLSRDKLLFAVILDHLTELLGASLDQPFELMDSGGGVSAKVVNVEPCTYVAVLAEVVKNGEPESALMERLPLILTLLIHFICSVSDTQFPVMQKEGSKNPLIITPDLRRAAEKPAGMAVAAIKNLLNRTRSNMVIEDMNQARAWTDCLDKDSFIQAITVFIRSLVEQRPAWVSPLAKTMEEYANSESEPRRLAAVIIAASLIRRSTSENGEFNEQLLVKCIRRLEDSLTDPSLRIRKLCVKGLGELSECSSTDVISRFVHMAVEAAMSGLDDHGDRKDTVAIESIMALNKLVQLTNNDQLKSILPLVLLKIRPCFEKDSHTLRAASFSLFGELGSRVGENSEEFRGHLHTNIVSLLLHLNDDFEEVRQNCANSIYRLHGLLTSPNASICIERELKDGKQPASYNLFIKDFASILANSFPDRINQYALATSNYFKSSSARIRCNAAHLTGCLLDGLTAPLRATISRELVFTGLVALLKDSEDVNVRISATRAIANLHDFH</sequence>
<reference key="1">
    <citation type="journal article" date="1998" name="Science">
        <title>Genome sequence of the nematode C. elegans: a platform for investigating biology.</title>
        <authorList>
            <consortium name="The C. elegans sequencing consortium"/>
        </authorList>
    </citation>
    <scope>NUCLEOTIDE SEQUENCE [LARGE SCALE GENOMIC DNA]</scope>
    <source>
        <strain>Bristol N2</strain>
    </source>
</reference>
<reference key="2">
    <citation type="journal article" date="2024" name="Nature">
        <title>The HEAT repeat protein HPO-27 is a lysosome fission factor.</title>
        <authorList>
            <person name="Li L."/>
            <person name="Liu X."/>
            <person name="Yang S."/>
            <person name="Li M."/>
            <person name="Wu Y."/>
            <person name="Hu S."/>
            <person name="Wang W."/>
            <person name="Jiang A."/>
            <person name="Zhang Q."/>
            <person name="Zhang J."/>
            <person name="Ma X."/>
            <person name="Hu J."/>
            <person name="Zhao Q."/>
            <person name="Liu Y."/>
            <person name="Li D."/>
            <person name="Hu J."/>
            <person name="Yang C."/>
            <person name="Feng W."/>
            <person name="Wang X."/>
        </authorList>
    </citation>
    <scope>FUNCTION</scope>
    <scope>SUBUNIT</scope>
    <scope>SUBCELLULAR LOCATION</scope>
</reference>